<accession>B7UN24</accession>
<proteinExistence type="inferred from homology"/>
<comment type="function">
    <text evidence="1">Catalyzes the conversion of dihydroorotate to orotate with quinone as electron acceptor.</text>
</comment>
<comment type="catalytic activity">
    <reaction evidence="1">
        <text>(S)-dihydroorotate + a quinone = orotate + a quinol</text>
        <dbReference type="Rhea" id="RHEA:30187"/>
        <dbReference type="ChEBI" id="CHEBI:24646"/>
        <dbReference type="ChEBI" id="CHEBI:30839"/>
        <dbReference type="ChEBI" id="CHEBI:30864"/>
        <dbReference type="ChEBI" id="CHEBI:132124"/>
        <dbReference type="EC" id="1.3.5.2"/>
    </reaction>
</comment>
<comment type="cofactor">
    <cofactor evidence="1">
        <name>FMN</name>
        <dbReference type="ChEBI" id="CHEBI:58210"/>
    </cofactor>
    <text evidence="1">Binds 1 FMN per subunit.</text>
</comment>
<comment type="pathway">
    <text evidence="1">Pyrimidine metabolism; UMP biosynthesis via de novo pathway; orotate from (S)-dihydroorotate (quinone route): step 1/1.</text>
</comment>
<comment type="subunit">
    <text evidence="1">Monomer.</text>
</comment>
<comment type="subcellular location">
    <subcellularLocation>
        <location evidence="1">Cell membrane</location>
        <topology evidence="1">Peripheral membrane protein</topology>
    </subcellularLocation>
</comment>
<comment type="similarity">
    <text evidence="1">Belongs to the dihydroorotate dehydrogenase family. Type 2 subfamily.</text>
</comment>
<protein>
    <recommendedName>
        <fullName evidence="1">Dihydroorotate dehydrogenase (quinone)</fullName>
        <ecNumber evidence="1">1.3.5.2</ecNumber>
    </recommendedName>
    <alternativeName>
        <fullName evidence="1">DHOdehase</fullName>
        <shortName evidence="1">DHOD</shortName>
        <shortName evidence="1">DHODase</shortName>
    </alternativeName>
    <alternativeName>
        <fullName evidence="1">Dihydroorotate oxidase</fullName>
    </alternativeName>
</protein>
<organism>
    <name type="scientific">Escherichia coli O127:H6 (strain E2348/69 / EPEC)</name>
    <dbReference type="NCBI Taxonomy" id="574521"/>
    <lineage>
        <taxon>Bacteria</taxon>
        <taxon>Pseudomonadati</taxon>
        <taxon>Pseudomonadota</taxon>
        <taxon>Gammaproteobacteria</taxon>
        <taxon>Enterobacterales</taxon>
        <taxon>Enterobacteriaceae</taxon>
        <taxon>Escherichia</taxon>
    </lineage>
</organism>
<reference key="1">
    <citation type="journal article" date="2009" name="J. Bacteriol.">
        <title>Complete genome sequence and comparative genome analysis of enteropathogenic Escherichia coli O127:H6 strain E2348/69.</title>
        <authorList>
            <person name="Iguchi A."/>
            <person name="Thomson N.R."/>
            <person name="Ogura Y."/>
            <person name="Saunders D."/>
            <person name="Ooka T."/>
            <person name="Henderson I.R."/>
            <person name="Harris D."/>
            <person name="Asadulghani M."/>
            <person name="Kurokawa K."/>
            <person name="Dean P."/>
            <person name="Kenny B."/>
            <person name="Quail M.A."/>
            <person name="Thurston S."/>
            <person name="Dougan G."/>
            <person name="Hayashi T."/>
            <person name="Parkhill J."/>
            <person name="Frankel G."/>
        </authorList>
    </citation>
    <scope>NUCLEOTIDE SEQUENCE [LARGE SCALE GENOMIC DNA]</scope>
    <source>
        <strain>E2348/69 / EPEC</strain>
    </source>
</reference>
<dbReference type="EC" id="1.3.5.2" evidence="1"/>
<dbReference type="EMBL" id="FM180568">
    <property type="protein sequence ID" value="CAS08479.1"/>
    <property type="molecule type" value="Genomic_DNA"/>
</dbReference>
<dbReference type="RefSeq" id="WP_001295934.1">
    <property type="nucleotide sequence ID" value="NC_011601.1"/>
</dbReference>
<dbReference type="SMR" id="B7UN24"/>
<dbReference type="KEGG" id="ecg:E2348C_0931"/>
<dbReference type="HOGENOM" id="CLU_013640_2_0_6"/>
<dbReference type="UniPathway" id="UPA00070">
    <property type="reaction ID" value="UER00946"/>
</dbReference>
<dbReference type="Proteomes" id="UP000008205">
    <property type="component" value="Chromosome"/>
</dbReference>
<dbReference type="GO" id="GO:0005737">
    <property type="term" value="C:cytoplasm"/>
    <property type="evidence" value="ECO:0007669"/>
    <property type="project" value="InterPro"/>
</dbReference>
<dbReference type="GO" id="GO:0005886">
    <property type="term" value="C:plasma membrane"/>
    <property type="evidence" value="ECO:0007669"/>
    <property type="project" value="UniProtKB-SubCell"/>
</dbReference>
<dbReference type="GO" id="GO:0106430">
    <property type="term" value="F:dihydroorotate dehydrogenase (quinone) activity"/>
    <property type="evidence" value="ECO:0007669"/>
    <property type="project" value="UniProtKB-EC"/>
</dbReference>
<dbReference type="GO" id="GO:0006207">
    <property type="term" value="P:'de novo' pyrimidine nucleobase biosynthetic process"/>
    <property type="evidence" value="ECO:0007669"/>
    <property type="project" value="InterPro"/>
</dbReference>
<dbReference type="GO" id="GO:0044205">
    <property type="term" value="P:'de novo' UMP biosynthetic process"/>
    <property type="evidence" value="ECO:0007669"/>
    <property type="project" value="UniProtKB-UniRule"/>
</dbReference>
<dbReference type="CDD" id="cd04738">
    <property type="entry name" value="DHOD_2_like"/>
    <property type="match status" value="1"/>
</dbReference>
<dbReference type="FunFam" id="3.20.20.70:FF:000028">
    <property type="entry name" value="Dihydroorotate dehydrogenase (quinone)"/>
    <property type="match status" value="1"/>
</dbReference>
<dbReference type="Gene3D" id="3.20.20.70">
    <property type="entry name" value="Aldolase class I"/>
    <property type="match status" value="1"/>
</dbReference>
<dbReference type="HAMAP" id="MF_00225">
    <property type="entry name" value="DHO_dh_type2"/>
    <property type="match status" value="1"/>
</dbReference>
<dbReference type="InterPro" id="IPR013785">
    <property type="entry name" value="Aldolase_TIM"/>
</dbReference>
<dbReference type="InterPro" id="IPR050074">
    <property type="entry name" value="DHO_dehydrogenase"/>
</dbReference>
<dbReference type="InterPro" id="IPR012135">
    <property type="entry name" value="Dihydroorotate_DH_1_2"/>
</dbReference>
<dbReference type="InterPro" id="IPR005719">
    <property type="entry name" value="Dihydroorotate_DH_2"/>
</dbReference>
<dbReference type="InterPro" id="IPR005720">
    <property type="entry name" value="Dihydroorotate_DH_cat"/>
</dbReference>
<dbReference type="InterPro" id="IPR001295">
    <property type="entry name" value="Dihydroorotate_DH_CS"/>
</dbReference>
<dbReference type="NCBIfam" id="NF003644">
    <property type="entry name" value="PRK05286.1-1"/>
    <property type="match status" value="1"/>
</dbReference>
<dbReference type="NCBIfam" id="NF003645">
    <property type="entry name" value="PRK05286.1-2"/>
    <property type="match status" value="1"/>
</dbReference>
<dbReference type="NCBIfam" id="NF003646">
    <property type="entry name" value="PRK05286.1-4"/>
    <property type="match status" value="1"/>
</dbReference>
<dbReference type="NCBIfam" id="NF003652">
    <property type="entry name" value="PRK05286.2-5"/>
    <property type="match status" value="1"/>
</dbReference>
<dbReference type="NCBIfam" id="TIGR01036">
    <property type="entry name" value="pyrD_sub2"/>
    <property type="match status" value="1"/>
</dbReference>
<dbReference type="PANTHER" id="PTHR48109:SF4">
    <property type="entry name" value="DIHYDROOROTATE DEHYDROGENASE (QUINONE), MITOCHONDRIAL"/>
    <property type="match status" value="1"/>
</dbReference>
<dbReference type="PANTHER" id="PTHR48109">
    <property type="entry name" value="DIHYDROOROTATE DEHYDROGENASE (QUINONE), MITOCHONDRIAL-RELATED"/>
    <property type="match status" value="1"/>
</dbReference>
<dbReference type="Pfam" id="PF01180">
    <property type="entry name" value="DHO_dh"/>
    <property type="match status" value="1"/>
</dbReference>
<dbReference type="PIRSF" id="PIRSF000164">
    <property type="entry name" value="DHO_oxidase"/>
    <property type="match status" value="1"/>
</dbReference>
<dbReference type="SUPFAM" id="SSF51395">
    <property type="entry name" value="FMN-linked oxidoreductases"/>
    <property type="match status" value="1"/>
</dbReference>
<dbReference type="PROSITE" id="PS00911">
    <property type="entry name" value="DHODEHASE_1"/>
    <property type="match status" value="1"/>
</dbReference>
<dbReference type="PROSITE" id="PS00912">
    <property type="entry name" value="DHODEHASE_2"/>
    <property type="match status" value="1"/>
</dbReference>
<keyword id="KW-1003">Cell membrane</keyword>
<keyword id="KW-0285">Flavoprotein</keyword>
<keyword id="KW-0288">FMN</keyword>
<keyword id="KW-0472">Membrane</keyword>
<keyword id="KW-0560">Oxidoreductase</keyword>
<keyword id="KW-0665">Pyrimidine biosynthesis</keyword>
<keyword id="KW-1185">Reference proteome</keyword>
<feature type="chain" id="PRO_1000195071" description="Dihydroorotate dehydrogenase (quinone)">
    <location>
        <begin position="1"/>
        <end position="336"/>
    </location>
</feature>
<feature type="active site" description="Nucleophile" evidence="1">
    <location>
        <position position="175"/>
    </location>
</feature>
<feature type="binding site" evidence="1">
    <location>
        <begin position="62"/>
        <end position="66"/>
    </location>
    <ligand>
        <name>FMN</name>
        <dbReference type="ChEBI" id="CHEBI:58210"/>
    </ligand>
</feature>
<feature type="binding site" evidence="1">
    <location>
        <position position="66"/>
    </location>
    <ligand>
        <name>substrate</name>
    </ligand>
</feature>
<feature type="binding site" evidence="1">
    <location>
        <position position="86"/>
    </location>
    <ligand>
        <name>FMN</name>
        <dbReference type="ChEBI" id="CHEBI:58210"/>
    </ligand>
</feature>
<feature type="binding site" evidence="1">
    <location>
        <begin position="111"/>
        <end position="115"/>
    </location>
    <ligand>
        <name>substrate</name>
    </ligand>
</feature>
<feature type="binding site" evidence="1">
    <location>
        <position position="139"/>
    </location>
    <ligand>
        <name>FMN</name>
        <dbReference type="ChEBI" id="CHEBI:58210"/>
    </ligand>
</feature>
<feature type="binding site" evidence="1">
    <location>
        <position position="172"/>
    </location>
    <ligand>
        <name>FMN</name>
        <dbReference type="ChEBI" id="CHEBI:58210"/>
    </ligand>
</feature>
<feature type="binding site" evidence="1">
    <location>
        <position position="172"/>
    </location>
    <ligand>
        <name>substrate</name>
    </ligand>
</feature>
<feature type="binding site" evidence="1">
    <location>
        <position position="177"/>
    </location>
    <ligand>
        <name>substrate</name>
    </ligand>
</feature>
<feature type="binding site" evidence="1">
    <location>
        <position position="217"/>
    </location>
    <ligand>
        <name>FMN</name>
        <dbReference type="ChEBI" id="CHEBI:58210"/>
    </ligand>
</feature>
<feature type="binding site" evidence="1">
    <location>
        <position position="245"/>
    </location>
    <ligand>
        <name>FMN</name>
        <dbReference type="ChEBI" id="CHEBI:58210"/>
    </ligand>
</feature>
<feature type="binding site" evidence="1">
    <location>
        <begin position="246"/>
        <end position="247"/>
    </location>
    <ligand>
        <name>substrate</name>
    </ligand>
</feature>
<feature type="binding site" evidence="1">
    <location>
        <position position="268"/>
    </location>
    <ligand>
        <name>FMN</name>
        <dbReference type="ChEBI" id="CHEBI:58210"/>
    </ligand>
</feature>
<feature type="binding site" evidence="1">
    <location>
        <position position="297"/>
    </location>
    <ligand>
        <name>FMN</name>
        <dbReference type="ChEBI" id="CHEBI:58210"/>
    </ligand>
</feature>
<feature type="binding site" evidence="1">
    <location>
        <begin position="318"/>
        <end position="319"/>
    </location>
    <ligand>
        <name>FMN</name>
        <dbReference type="ChEBI" id="CHEBI:58210"/>
    </ligand>
</feature>
<gene>
    <name evidence="1" type="primary">pyrD</name>
    <name type="ordered locus">E2348C_0931</name>
</gene>
<name>PYRD_ECO27</name>
<sequence>MYYPFVRKALFQLDPERAHEFTFQQLRRITGTPFEALVRQKVPAKPVNCMGLTFKNPLGLAAGLDKDGECIDALGAMGFGSIEIGTVTPRPQPGNDKPRLFRLVDAEGLINRMGFNNLGVDNLVENVKKAHYDGVLGINIGKNKDTPVEQGKDDYLICMEKIYAYAGYIAINISSPNTPGLRTLQYGEALDDLLTAIKNKQNDLQVMHHKYVPIAVKIAPDLSEEELIQVADSLVRHNIDGVIATNTTLDRSLVQGMKNCDQTGGLSGRPLQLKSTEIIRRLSQELNGRLPIIGVGGIDSVIAAREKIAAGASLVQIYSGFIFKGPPLIKEIVTHI</sequence>
<evidence type="ECO:0000255" key="1">
    <source>
        <dbReference type="HAMAP-Rule" id="MF_00225"/>
    </source>
</evidence>